<gene>
    <name type="primary">nolS</name>
    <name type="ordered locus">SM2011_a0754.1</name>
</gene>
<proteinExistence type="predicted"/>
<geneLocation type="plasmid">
    <name>pSymA</name>
    <name>megaplasmid 1</name>
</geneLocation>
<evidence type="ECO:0000269" key="1">
    <source>
    </source>
</evidence>
<protein>
    <recommendedName>
        <fullName>Nodulation protein NolS</fullName>
    </recommendedName>
</protein>
<comment type="function">
    <text evidence="1">Involved in nodulation of a particular host, M.lupulina.</text>
</comment>
<organism>
    <name type="scientific">Sinorhizobium meliloti (strain Sm2011 / Rm2011 / 2011)</name>
    <dbReference type="NCBI Taxonomy" id="1286640"/>
    <lineage>
        <taxon>Bacteria</taxon>
        <taxon>Pseudomonadati</taxon>
        <taxon>Pseudomonadota</taxon>
        <taxon>Alphaproteobacteria</taxon>
        <taxon>Hyphomicrobiales</taxon>
        <taxon>Rhizobiaceae</taxon>
        <taxon>Sinorhizobium/Ensifer group</taxon>
        <taxon>Sinorhizobium</taxon>
    </lineage>
</organism>
<reference key="1">
    <citation type="journal article" date="1995" name="FEMS Microbiol. Lett.">
        <title>The Rhizobium meliloti region located downstream of the nod box n6 is involved in the specific nodulation of Medicago lupulina.</title>
        <authorList>
            <person name="Plazanet C."/>
            <person name="Refregier G."/>
            <person name="Demont N."/>
            <person name="Truchet G."/>
            <person name="Rosenberg C."/>
        </authorList>
    </citation>
    <scope>NUCLEOTIDE SEQUENCE [GENOMIC DNA]</scope>
    <scope>FUNCTION</scope>
    <source>
        <strain>Sm2011 / Rm2011 / 2011</strain>
    </source>
</reference>
<reference key="2">
    <citation type="journal article" date="2013" name="DNA Res.">
        <title>Next-generation annotation of prokaryotic genomes with EuGene-P: application to Sinorhizobium meliloti 2011.</title>
        <authorList>
            <person name="Sallet E."/>
            <person name="Roux B."/>
            <person name="Sauviac L."/>
            <person name="Jardinaud M.F."/>
            <person name="Carrere S."/>
            <person name="Faraut T."/>
            <person name="de Carvalho-Niebel F."/>
            <person name="Gouzy J."/>
            <person name="Gamas P."/>
            <person name="Capela D."/>
            <person name="Bruand C."/>
            <person name="Schiex T."/>
        </authorList>
    </citation>
    <scope>NUCLEOTIDE SEQUENCE [LARGE SCALE GENOMIC DNA]</scope>
    <source>
        <strain>Sm2011 / Rm2011 / 2011</strain>
    </source>
</reference>
<feature type="chain" id="PRO_0000096946" description="Nodulation protein NolS">
    <location>
        <begin position="1"/>
        <end position="90"/>
    </location>
</feature>
<dbReference type="EMBL" id="X91350">
    <property type="protein sequence ID" value="CAA62694.1"/>
    <property type="molecule type" value="Genomic_DNA"/>
</dbReference>
<dbReference type="EMBL" id="CP004138">
    <property type="status" value="NOT_ANNOTATED_CDS"/>
    <property type="molecule type" value="Genomic_DNA"/>
</dbReference>
<dbReference type="SMR" id="Q52975"/>
<dbReference type="GO" id="GO:0003824">
    <property type="term" value="F:catalytic activity"/>
    <property type="evidence" value="ECO:0007669"/>
    <property type="project" value="UniProtKB-ARBA"/>
</dbReference>
<dbReference type="Gene3D" id="3.40.1190.20">
    <property type="match status" value="1"/>
</dbReference>
<dbReference type="InterPro" id="IPR029056">
    <property type="entry name" value="Ribokinase-like"/>
</dbReference>
<dbReference type="SUPFAM" id="SSF53613">
    <property type="entry name" value="Ribokinase-like"/>
    <property type="match status" value="1"/>
</dbReference>
<name>NOLS_SINM2</name>
<sequence length="90" mass="9320">MRSKPPSWGHEGIISRHPTKLLPIGLPGTGDLFAGSIVAGLARGVPLPRAVAIAQNLTSRAQDHANALGAGEVVLSEPESRRALVALDPN</sequence>
<keyword id="KW-0536">Nodulation</keyword>
<keyword id="KW-0614">Plasmid</keyword>
<accession>Q52975</accession>